<comment type="function">
    <text evidence="1">Negative regulator of class I heat shock genes (grpE-dnaK-dnaJ and groELS operons). Prevents heat-shock induction of these operons.</text>
</comment>
<comment type="similarity">
    <text evidence="1">Belongs to the HrcA family.</text>
</comment>
<organism>
    <name type="scientific">Bifidobacterium longum (strain NCC 2705)</name>
    <dbReference type="NCBI Taxonomy" id="206672"/>
    <lineage>
        <taxon>Bacteria</taxon>
        <taxon>Bacillati</taxon>
        <taxon>Actinomycetota</taxon>
        <taxon>Actinomycetes</taxon>
        <taxon>Bifidobacteriales</taxon>
        <taxon>Bifidobacteriaceae</taxon>
        <taxon>Bifidobacterium</taxon>
    </lineage>
</organism>
<protein>
    <recommendedName>
        <fullName evidence="1">Heat-inducible transcription repressor HrcA</fullName>
    </recommendedName>
</protein>
<dbReference type="EMBL" id="AE014295">
    <property type="protein sequence ID" value="AAN24536.1"/>
    <property type="molecule type" value="Genomic_DNA"/>
</dbReference>
<dbReference type="RefSeq" id="NP_695900.1">
    <property type="nucleotide sequence ID" value="NC_004307.2"/>
</dbReference>
<dbReference type="RefSeq" id="WP_011068110.1">
    <property type="nucleotide sequence ID" value="NC_004307.2"/>
</dbReference>
<dbReference type="SMR" id="Q8G6C7"/>
<dbReference type="STRING" id="206672.BL0718"/>
<dbReference type="EnsemblBacteria" id="AAN24536">
    <property type="protein sequence ID" value="AAN24536"/>
    <property type="gene ID" value="BL0718"/>
</dbReference>
<dbReference type="KEGG" id="blo:BL0718"/>
<dbReference type="PATRIC" id="fig|206672.9.peg.416"/>
<dbReference type="HOGENOM" id="CLU_050019_2_0_11"/>
<dbReference type="OrthoDB" id="9783139at2"/>
<dbReference type="PhylomeDB" id="Q8G6C7"/>
<dbReference type="Proteomes" id="UP000000439">
    <property type="component" value="Chromosome"/>
</dbReference>
<dbReference type="GO" id="GO:0003677">
    <property type="term" value="F:DNA binding"/>
    <property type="evidence" value="ECO:0007669"/>
    <property type="project" value="InterPro"/>
</dbReference>
<dbReference type="GO" id="GO:0045892">
    <property type="term" value="P:negative regulation of DNA-templated transcription"/>
    <property type="evidence" value="ECO:0007669"/>
    <property type="project" value="UniProtKB-UniRule"/>
</dbReference>
<dbReference type="FunFam" id="1.10.10.10:FF:000049">
    <property type="entry name" value="Heat-inducible transcription repressor HrcA"/>
    <property type="match status" value="1"/>
</dbReference>
<dbReference type="Gene3D" id="3.30.450.40">
    <property type="match status" value="1"/>
</dbReference>
<dbReference type="Gene3D" id="3.30.390.60">
    <property type="entry name" value="Heat-inducible transcription repressor hrca homolog, domain 3"/>
    <property type="match status" value="1"/>
</dbReference>
<dbReference type="Gene3D" id="1.10.10.10">
    <property type="entry name" value="Winged helix-like DNA-binding domain superfamily/Winged helix DNA-binding domain"/>
    <property type="match status" value="1"/>
</dbReference>
<dbReference type="HAMAP" id="MF_00081">
    <property type="entry name" value="HrcA"/>
    <property type="match status" value="1"/>
</dbReference>
<dbReference type="InterPro" id="IPR029016">
    <property type="entry name" value="GAF-like_dom_sf"/>
</dbReference>
<dbReference type="InterPro" id="IPR002571">
    <property type="entry name" value="HrcA"/>
</dbReference>
<dbReference type="InterPro" id="IPR021153">
    <property type="entry name" value="HrcA_C"/>
</dbReference>
<dbReference type="InterPro" id="IPR036388">
    <property type="entry name" value="WH-like_DNA-bd_sf"/>
</dbReference>
<dbReference type="InterPro" id="IPR036390">
    <property type="entry name" value="WH_DNA-bd_sf"/>
</dbReference>
<dbReference type="InterPro" id="IPR023120">
    <property type="entry name" value="WHTH_transcript_rep_HrcA_IDD"/>
</dbReference>
<dbReference type="NCBIfam" id="TIGR00331">
    <property type="entry name" value="hrcA"/>
    <property type="match status" value="1"/>
</dbReference>
<dbReference type="PANTHER" id="PTHR34824">
    <property type="entry name" value="HEAT-INDUCIBLE TRANSCRIPTION REPRESSOR HRCA"/>
    <property type="match status" value="1"/>
</dbReference>
<dbReference type="PANTHER" id="PTHR34824:SF1">
    <property type="entry name" value="HEAT-INDUCIBLE TRANSCRIPTION REPRESSOR HRCA"/>
    <property type="match status" value="1"/>
</dbReference>
<dbReference type="Pfam" id="PF01628">
    <property type="entry name" value="HrcA"/>
    <property type="match status" value="1"/>
</dbReference>
<dbReference type="PIRSF" id="PIRSF005485">
    <property type="entry name" value="HrcA"/>
    <property type="match status" value="1"/>
</dbReference>
<dbReference type="SUPFAM" id="SSF55781">
    <property type="entry name" value="GAF domain-like"/>
    <property type="match status" value="2"/>
</dbReference>
<dbReference type="SUPFAM" id="SSF46785">
    <property type="entry name" value="Winged helix' DNA-binding domain"/>
    <property type="match status" value="1"/>
</dbReference>
<accession>Q8G6C7</accession>
<sequence length="372" mass="39456">MTQSRRMLVLRAVVEDYIRSQEPVGSTSLTRDHDLGVSSATIRNDMAALEDEGYLIQPHTSAGRVPTEKGYRYFVDRLATVVPLSEAQRRGINSFLSGSVSLKDALQRSARLLSEITGQVAVVASPSLAKATLRHVEMVPVAMTTLLAVVITDTGRVAQHGLTIASMPAVDEINRLSNTVNEQCDGLSLSKSAETVRSIAASAGYESVRGVADTLADAFESMALDERANELYMSGTSHLAHSRSLADLAPLFDALEEQVVLMKLMSNLSEETNASGVGVAIGSEMHTPGLLHASVVSSGYGRSGAAGEPAGNDPVGEPETESETESQTNDTEPIAFVGSIGPTHMDYAATMAAVRAVARYLTAFLSEGRTQD</sequence>
<feature type="chain" id="PRO_0000182453" description="Heat-inducible transcription repressor HrcA">
    <location>
        <begin position="1"/>
        <end position="372"/>
    </location>
</feature>
<feature type="region of interest" description="Disordered" evidence="2">
    <location>
        <begin position="300"/>
        <end position="334"/>
    </location>
</feature>
<keyword id="KW-1185">Reference proteome</keyword>
<keyword id="KW-0678">Repressor</keyword>
<keyword id="KW-0346">Stress response</keyword>
<keyword id="KW-0804">Transcription</keyword>
<keyword id="KW-0805">Transcription regulation</keyword>
<evidence type="ECO:0000255" key="1">
    <source>
        <dbReference type="HAMAP-Rule" id="MF_00081"/>
    </source>
</evidence>
<evidence type="ECO:0000256" key="2">
    <source>
        <dbReference type="SAM" id="MobiDB-lite"/>
    </source>
</evidence>
<proteinExistence type="inferred from homology"/>
<reference key="1">
    <citation type="journal article" date="2002" name="Proc. Natl. Acad. Sci. U.S.A.">
        <title>The genome sequence of Bifidobacterium longum reflects its adaptation to the human gastrointestinal tract.</title>
        <authorList>
            <person name="Schell M.A."/>
            <person name="Karmirantzou M."/>
            <person name="Snel B."/>
            <person name="Vilanova D."/>
            <person name="Berger B."/>
            <person name="Pessi G."/>
            <person name="Zwahlen M.-C."/>
            <person name="Desiere F."/>
            <person name="Bork P."/>
            <person name="Delley M."/>
            <person name="Pridmore R.D."/>
            <person name="Arigoni F."/>
        </authorList>
    </citation>
    <scope>NUCLEOTIDE SEQUENCE [LARGE SCALE GENOMIC DNA]</scope>
    <source>
        <strain>NCC 2705</strain>
    </source>
</reference>
<name>HRCA_BIFLO</name>
<gene>
    <name evidence="1" type="primary">hrcA</name>
    <name type="ordered locus">BL0718</name>
</gene>